<organism>
    <name type="scientific">Lactuca sativa</name>
    <name type="common">Garden lettuce</name>
    <dbReference type="NCBI Taxonomy" id="4236"/>
    <lineage>
        <taxon>Eukaryota</taxon>
        <taxon>Viridiplantae</taxon>
        <taxon>Streptophyta</taxon>
        <taxon>Embryophyta</taxon>
        <taxon>Tracheophyta</taxon>
        <taxon>Spermatophyta</taxon>
        <taxon>Magnoliopsida</taxon>
        <taxon>eudicotyledons</taxon>
        <taxon>Gunneridae</taxon>
        <taxon>Pentapetalae</taxon>
        <taxon>asterids</taxon>
        <taxon>campanulids</taxon>
        <taxon>Asterales</taxon>
        <taxon>Asteraceae</taxon>
        <taxon>Cichorioideae</taxon>
        <taxon>Cichorieae</taxon>
        <taxon>Lactucinae</taxon>
        <taxon>Lactuca</taxon>
    </lineage>
</organism>
<evidence type="ECO:0000255" key="1">
    <source>
        <dbReference type="HAMAP-Rule" id="MF_01346"/>
    </source>
</evidence>
<evidence type="ECO:0000305" key="2"/>
<reference key="1">
    <citation type="journal article" date="2006" name="Transgenic Res.">
        <title>Efficient and stable transformation of Lactuca sativa L. cv. Cisco (lettuce) plastids.</title>
        <authorList>
            <person name="Kanamoto H."/>
            <person name="Yamashita A."/>
            <person name="Asao H."/>
            <person name="Okumura S."/>
            <person name="Takase H."/>
            <person name="Hattori M."/>
            <person name="Yokota A."/>
            <person name="Tomizawa K."/>
        </authorList>
    </citation>
    <scope>NUCLEOTIDE SEQUENCE [LARGE SCALE GENOMIC DNA]</scope>
    <source>
        <strain>cv. Cisco</strain>
    </source>
</reference>
<reference key="2">
    <citation type="submission" date="2006-01" db="EMBL/GenBank/DDBJ databases">
        <title>A comparison of the first two published chloroplast genomes in Asteraceae: Lactuca and Helianthus.</title>
        <authorList>
            <person name="Timme R.E."/>
            <person name="Kuehl J.V."/>
            <person name="Boore J.L."/>
            <person name="Jansen R.K."/>
        </authorList>
    </citation>
    <scope>NUCLEOTIDE SEQUENCE [LARGE SCALE GENOMIC DNA]</scope>
    <source>
        <strain>cv. Salinas</strain>
    </source>
</reference>
<reference key="3">
    <citation type="journal article" date="2005" name="Mol. Biol. Evol.">
        <title>Two chloroplast DNA inversions originated simultaneously during the early evolution of the sunflower family (Asteraceae).</title>
        <authorList>
            <person name="Kim K.-J."/>
            <person name="Choi K.-S."/>
            <person name="Jansen R.K."/>
        </authorList>
    </citation>
    <scope>NUCLEOTIDE SEQUENCE [GENOMIC DNA]</scope>
</reference>
<feature type="chain" id="PRO_0000238425" description="ATP synthase subunit alpha, chloroplastic">
    <location>
        <begin position="1"/>
        <end position="508"/>
    </location>
</feature>
<feature type="binding site" evidence="1">
    <location>
        <begin position="170"/>
        <end position="177"/>
    </location>
    <ligand>
        <name>ATP</name>
        <dbReference type="ChEBI" id="CHEBI:30616"/>
    </ligand>
</feature>
<feature type="site" description="Required for activity" evidence="1">
    <location>
        <position position="363"/>
    </location>
</feature>
<gene>
    <name evidence="1" type="primary">atpA</name>
    <name type="ORF">PSC019</name>
</gene>
<sequence length="508" mass="55518">MVTIQADEISNIIRERIEQYNREVKIVNTGTVLQVGDGIARIHGLDEVMAGELVEFEEGTIGIALNLESTNVGVVLMGDGLLIQEGSSVKATGRIAQIPVSEAYLGRVINALAKPIDGRGEISSSEYRLIESPAPGIISRRSVYEPLQTGLIAIDSMIPIGRGQRELIIGDRQTGKTAVATDTILNQQGKNVICVYVAIGQKASSVAQVVTNFQERGAMEYTIVVAETADSPATLQYLAPYTGAALAEYFMYRERHTSIIYDDPSKQAQAYRQMSLLLRRPPGREAYPGDVFYLHSRLLERAAKLSSLLGEGSMTALPIVETQSGDVSAYIPTNVISITDGQIFLSADLFNAGIRPAINVGISVSRVGSAAQIKAMKQVAGKLKLELAQFAELEAFAQFASDLDKATQNQLARGQRLRELLKQSQSAPLGVEEQVLTIYTGTNGYLDSLEIGQVRKFLVELRTYLKTNKPQFQEIISSTKTFTEEAEAILKEAIKEQRERFILQEQAA</sequence>
<name>ATPA_LACSA</name>
<comment type="function">
    <text evidence="1">Produces ATP from ADP in the presence of a proton gradient across the membrane. The alpha chain is a regulatory subunit.</text>
</comment>
<comment type="catalytic activity">
    <reaction evidence="1">
        <text>ATP + H2O + 4 H(+)(in) = ADP + phosphate + 5 H(+)(out)</text>
        <dbReference type="Rhea" id="RHEA:57720"/>
        <dbReference type="ChEBI" id="CHEBI:15377"/>
        <dbReference type="ChEBI" id="CHEBI:15378"/>
        <dbReference type="ChEBI" id="CHEBI:30616"/>
        <dbReference type="ChEBI" id="CHEBI:43474"/>
        <dbReference type="ChEBI" id="CHEBI:456216"/>
        <dbReference type="EC" id="7.1.2.2"/>
    </reaction>
</comment>
<comment type="subunit">
    <text evidence="1">F-type ATPases have 2 components, CF(1) - the catalytic core - and CF(0) - the membrane proton channel. CF(1) has five subunits: alpha(3), beta(3), gamma(1), delta(1), epsilon(1). CF(0) has four main subunits: a, b, b' and c.</text>
</comment>
<comment type="subcellular location">
    <subcellularLocation>
        <location evidence="1">Plastid</location>
        <location evidence="1">Chloroplast thylakoid membrane</location>
        <topology evidence="1">Peripheral membrane protein</topology>
    </subcellularLocation>
</comment>
<comment type="similarity">
    <text evidence="1">Belongs to the ATPase alpha/beta chains family.</text>
</comment>
<comment type="sequence caution" evidence="2">
    <conflict type="frameshift">
        <sequence resource="EMBL-CDS" id="AAX58149"/>
    </conflict>
</comment>
<keyword id="KW-0066">ATP synthesis</keyword>
<keyword id="KW-0067">ATP-binding</keyword>
<keyword id="KW-0139">CF(1)</keyword>
<keyword id="KW-0150">Chloroplast</keyword>
<keyword id="KW-0375">Hydrogen ion transport</keyword>
<keyword id="KW-0406">Ion transport</keyword>
<keyword id="KW-0472">Membrane</keyword>
<keyword id="KW-0547">Nucleotide-binding</keyword>
<keyword id="KW-0934">Plastid</keyword>
<keyword id="KW-0793">Thylakoid</keyword>
<keyword id="KW-1278">Translocase</keyword>
<keyword id="KW-0813">Transport</keyword>
<dbReference type="EC" id="7.1.2.2" evidence="1"/>
<dbReference type="EMBL" id="AP007232">
    <property type="protein sequence ID" value="BAE47588.1"/>
    <property type="molecule type" value="Genomic_DNA"/>
</dbReference>
<dbReference type="EMBL" id="DQ383816">
    <property type="protein sequence ID" value="ABD47227.1"/>
    <property type="molecule type" value="Genomic_DNA"/>
</dbReference>
<dbReference type="EMBL" id="AY865171">
    <property type="protein sequence ID" value="AAX58149.1"/>
    <property type="status" value="ALT_FRAME"/>
    <property type="molecule type" value="Genomic_DNA"/>
</dbReference>
<dbReference type="RefSeq" id="YP_398323.1">
    <property type="nucleotide sequence ID" value="NC_007578.1"/>
</dbReference>
<dbReference type="SMR" id="Q332Y4"/>
<dbReference type="EnsemblPlants" id="rna-gnl|WGS:NBSK|LSAT_0X28780_mrna">
    <property type="protein sequence ID" value="cds-PLY91981.1"/>
    <property type="gene ID" value="gene-LSAT_0X28780"/>
</dbReference>
<dbReference type="EnsemblPlants" id="rna-gnl|WGS:NBSK|LSAT_1X38700_mrna">
    <property type="protein sequence ID" value="cds-PLY97261.1"/>
    <property type="gene ID" value="gene-LSAT_1X38700"/>
</dbReference>
<dbReference type="EnsemblPlants" id="rna-gnl|WGS:NBSK|LSAT_1X88060_mrna">
    <property type="protein sequence ID" value="cds-PLY71590.1"/>
    <property type="gene ID" value="gene-LSAT_1X88060"/>
</dbReference>
<dbReference type="EnsemblPlants" id="rna-gnl|WGS:NBSK|LSAT_8X122301_mrna">
    <property type="protein sequence ID" value="cds-PLY83516.1"/>
    <property type="gene ID" value="gene-LSAT_8X122301"/>
</dbReference>
<dbReference type="GeneID" id="3772896"/>
<dbReference type="Gramene" id="rna-gnl|WGS:NBSK|LSAT_0X28780_mrna">
    <property type="protein sequence ID" value="cds-PLY91981.1"/>
    <property type="gene ID" value="gene-LSAT_0X28780"/>
</dbReference>
<dbReference type="Gramene" id="rna-gnl|WGS:NBSK|LSAT_1X38700_mrna">
    <property type="protein sequence ID" value="cds-PLY97261.1"/>
    <property type="gene ID" value="gene-LSAT_1X38700"/>
</dbReference>
<dbReference type="Gramene" id="rna-gnl|WGS:NBSK|LSAT_1X88060_mrna">
    <property type="protein sequence ID" value="cds-PLY71590.1"/>
    <property type="gene ID" value="gene-LSAT_1X88060"/>
</dbReference>
<dbReference type="Gramene" id="rna-gnl|WGS:NBSK|LSAT_8X122301_mrna">
    <property type="protein sequence ID" value="cds-PLY83516.1"/>
    <property type="gene ID" value="gene-LSAT_8X122301"/>
</dbReference>
<dbReference type="KEGG" id="lsv:3772896"/>
<dbReference type="OrthoDB" id="9805536at2759"/>
<dbReference type="GO" id="GO:0009535">
    <property type="term" value="C:chloroplast thylakoid membrane"/>
    <property type="evidence" value="ECO:0007669"/>
    <property type="project" value="UniProtKB-SubCell"/>
</dbReference>
<dbReference type="GO" id="GO:0045259">
    <property type="term" value="C:proton-transporting ATP synthase complex"/>
    <property type="evidence" value="ECO:0007669"/>
    <property type="project" value="UniProtKB-KW"/>
</dbReference>
<dbReference type="GO" id="GO:0005524">
    <property type="term" value="F:ATP binding"/>
    <property type="evidence" value="ECO:0007669"/>
    <property type="project" value="UniProtKB-UniRule"/>
</dbReference>
<dbReference type="GO" id="GO:0046933">
    <property type="term" value="F:proton-transporting ATP synthase activity, rotational mechanism"/>
    <property type="evidence" value="ECO:0007669"/>
    <property type="project" value="UniProtKB-UniRule"/>
</dbReference>
<dbReference type="CDD" id="cd18113">
    <property type="entry name" value="ATP-synt_F1_alpha_C"/>
    <property type="match status" value="1"/>
</dbReference>
<dbReference type="CDD" id="cd18116">
    <property type="entry name" value="ATP-synt_F1_alpha_N"/>
    <property type="match status" value="1"/>
</dbReference>
<dbReference type="CDD" id="cd01132">
    <property type="entry name" value="F1-ATPase_alpha_CD"/>
    <property type="match status" value="1"/>
</dbReference>
<dbReference type="FunFam" id="1.20.150.20:FF:000001">
    <property type="entry name" value="ATP synthase subunit alpha"/>
    <property type="match status" value="1"/>
</dbReference>
<dbReference type="FunFam" id="2.40.30.20:FF:000001">
    <property type="entry name" value="ATP synthase subunit alpha"/>
    <property type="match status" value="1"/>
</dbReference>
<dbReference type="FunFam" id="3.40.50.300:FF:000002">
    <property type="entry name" value="ATP synthase subunit alpha"/>
    <property type="match status" value="1"/>
</dbReference>
<dbReference type="Gene3D" id="2.40.30.20">
    <property type="match status" value="1"/>
</dbReference>
<dbReference type="Gene3D" id="1.20.150.20">
    <property type="entry name" value="ATP synthase alpha/beta chain, C-terminal domain"/>
    <property type="match status" value="1"/>
</dbReference>
<dbReference type="Gene3D" id="3.40.50.300">
    <property type="entry name" value="P-loop containing nucleotide triphosphate hydrolases"/>
    <property type="match status" value="1"/>
</dbReference>
<dbReference type="HAMAP" id="MF_01346">
    <property type="entry name" value="ATP_synth_alpha_bact"/>
    <property type="match status" value="1"/>
</dbReference>
<dbReference type="InterPro" id="IPR023366">
    <property type="entry name" value="ATP_synth_asu-like_sf"/>
</dbReference>
<dbReference type="InterPro" id="IPR000793">
    <property type="entry name" value="ATP_synth_asu_C"/>
</dbReference>
<dbReference type="InterPro" id="IPR038376">
    <property type="entry name" value="ATP_synth_asu_C_sf"/>
</dbReference>
<dbReference type="InterPro" id="IPR033732">
    <property type="entry name" value="ATP_synth_F1_a_nt-bd_dom"/>
</dbReference>
<dbReference type="InterPro" id="IPR005294">
    <property type="entry name" value="ATP_synth_F1_asu"/>
</dbReference>
<dbReference type="InterPro" id="IPR020003">
    <property type="entry name" value="ATPase_a/bsu_AS"/>
</dbReference>
<dbReference type="InterPro" id="IPR004100">
    <property type="entry name" value="ATPase_F1/V1/A1_a/bsu_N"/>
</dbReference>
<dbReference type="InterPro" id="IPR036121">
    <property type="entry name" value="ATPase_F1/V1/A1_a/bsu_N_sf"/>
</dbReference>
<dbReference type="InterPro" id="IPR000194">
    <property type="entry name" value="ATPase_F1/V1/A1_a/bsu_nucl-bd"/>
</dbReference>
<dbReference type="InterPro" id="IPR027417">
    <property type="entry name" value="P-loop_NTPase"/>
</dbReference>
<dbReference type="NCBIfam" id="TIGR00962">
    <property type="entry name" value="atpA"/>
    <property type="match status" value="1"/>
</dbReference>
<dbReference type="NCBIfam" id="NF009884">
    <property type="entry name" value="PRK13343.1"/>
    <property type="match status" value="1"/>
</dbReference>
<dbReference type="PANTHER" id="PTHR48082">
    <property type="entry name" value="ATP SYNTHASE SUBUNIT ALPHA, MITOCHONDRIAL"/>
    <property type="match status" value="1"/>
</dbReference>
<dbReference type="PANTHER" id="PTHR48082:SF2">
    <property type="entry name" value="ATP SYNTHASE SUBUNIT ALPHA, MITOCHONDRIAL"/>
    <property type="match status" value="1"/>
</dbReference>
<dbReference type="Pfam" id="PF00006">
    <property type="entry name" value="ATP-synt_ab"/>
    <property type="match status" value="1"/>
</dbReference>
<dbReference type="Pfam" id="PF00306">
    <property type="entry name" value="ATP-synt_ab_C"/>
    <property type="match status" value="1"/>
</dbReference>
<dbReference type="Pfam" id="PF02874">
    <property type="entry name" value="ATP-synt_ab_N"/>
    <property type="match status" value="1"/>
</dbReference>
<dbReference type="PIRSF" id="PIRSF039088">
    <property type="entry name" value="F_ATPase_subunit_alpha"/>
    <property type="match status" value="1"/>
</dbReference>
<dbReference type="SUPFAM" id="SSF47917">
    <property type="entry name" value="C-terminal domain of alpha and beta subunits of F1 ATP synthase"/>
    <property type="match status" value="1"/>
</dbReference>
<dbReference type="SUPFAM" id="SSF50615">
    <property type="entry name" value="N-terminal domain of alpha and beta subunits of F1 ATP synthase"/>
    <property type="match status" value="1"/>
</dbReference>
<dbReference type="SUPFAM" id="SSF52540">
    <property type="entry name" value="P-loop containing nucleoside triphosphate hydrolases"/>
    <property type="match status" value="1"/>
</dbReference>
<dbReference type="PROSITE" id="PS00152">
    <property type="entry name" value="ATPASE_ALPHA_BETA"/>
    <property type="match status" value="1"/>
</dbReference>
<accession>Q332Y4</accession>
<accession>Q56P06</accession>
<geneLocation type="chloroplast"/>
<protein>
    <recommendedName>
        <fullName evidence="1">ATP synthase subunit alpha, chloroplastic</fullName>
        <ecNumber evidence="1">7.1.2.2</ecNumber>
    </recommendedName>
    <alternativeName>
        <fullName evidence="1">ATP synthase F1 sector subunit alpha</fullName>
    </alternativeName>
    <alternativeName>
        <fullName evidence="1">F-ATPase subunit alpha</fullName>
    </alternativeName>
</protein>
<proteinExistence type="inferred from homology"/>